<gene>
    <name type="primary">LY6D</name>
</gene>
<keyword id="KW-1003">Cell membrane</keyword>
<keyword id="KW-1015">Disulfide bond</keyword>
<keyword id="KW-0325">Glycoprotein</keyword>
<keyword id="KW-0336">GPI-anchor</keyword>
<keyword id="KW-0449">Lipoprotein</keyword>
<keyword id="KW-0472">Membrane</keyword>
<keyword id="KW-1185">Reference proteome</keyword>
<keyword id="KW-0732">Signal</keyword>
<evidence type="ECO:0000250" key="1"/>
<evidence type="ECO:0000255" key="2"/>
<accession>Q148C3</accession>
<sequence length="128" mass="13365">MKTVLLFLVALAAAAGPAQALRCHVCTSSSNCKKPQVCSASSSFCKTVIRVEPLSGNLVEKNCSVWCTPTNNQQGQVSKGQETTLCCNSDLCNEALQSWQSAAPARTSAHLGLALACGLLALLWAPGL</sequence>
<comment type="function">
    <text evidence="1">May act as a specification marker at earliest stage specification of lymphocytes between B- and T-cell development. Marks the earliest stage of B-cell specification (By similarity).</text>
</comment>
<comment type="subcellular location">
    <subcellularLocation>
        <location evidence="1">Cell membrane</location>
        <topology evidence="1">Lipid-anchor</topology>
        <topology evidence="1">GPI-anchor</topology>
    </subcellularLocation>
</comment>
<organism>
    <name type="scientific">Bos taurus</name>
    <name type="common">Bovine</name>
    <dbReference type="NCBI Taxonomy" id="9913"/>
    <lineage>
        <taxon>Eukaryota</taxon>
        <taxon>Metazoa</taxon>
        <taxon>Chordata</taxon>
        <taxon>Craniata</taxon>
        <taxon>Vertebrata</taxon>
        <taxon>Euteleostomi</taxon>
        <taxon>Mammalia</taxon>
        <taxon>Eutheria</taxon>
        <taxon>Laurasiatheria</taxon>
        <taxon>Artiodactyla</taxon>
        <taxon>Ruminantia</taxon>
        <taxon>Pecora</taxon>
        <taxon>Bovidae</taxon>
        <taxon>Bovinae</taxon>
        <taxon>Bos</taxon>
    </lineage>
</organism>
<reference key="1">
    <citation type="submission" date="2006-06" db="EMBL/GenBank/DDBJ databases">
        <authorList>
            <consortium name="NIH - Mammalian Gene Collection (MGC) project"/>
        </authorList>
    </citation>
    <scope>NUCLEOTIDE SEQUENCE [LARGE SCALE MRNA]</scope>
    <source>
        <strain>Hereford</strain>
        <tissue>Fetal skin</tissue>
    </source>
</reference>
<dbReference type="EMBL" id="BC118490">
    <property type="protein sequence ID" value="AAI18491.1"/>
    <property type="molecule type" value="mRNA"/>
</dbReference>
<dbReference type="RefSeq" id="NP_001069985.1">
    <property type="nucleotide sequence ID" value="NM_001076517.1"/>
</dbReference>
<dbReference type="SMR" id="Q148C3"/>
<dbReference type="FunCoup" id="Q148C3">
    <property type="interactions" value="28"/>
</dbReference>
<dbReference type="STRING" id="9913.ENSBTAP00000045838"/>
<dbReference type="PaxDb" id="9913-ENSBTAP00000045838"/>
<dbReference type="Ensembl" id="ENSBTAT00000048872.5">
    <property type="protein sequence ID" value="ENSBTAP00000045838.3"/>
    <property type="gene ID" value="ENSBTAG00000034498.5"/>
</dbReference>
<dbReference type="GeneID" id="618714"/>
<dbReference type="KEGG" id="bta:618714"/>
<dbReference type="CTD" id="8581"/>
<dbReference type="VEuPathDB" id="HostDB:ENSBTAG00000034498"/>
<dbReference type="VGNC" id="VGNC:31088">
    <property type="gene designation" value="LY6D"/>
</dbReference>
<dbReference type="eggNOG" id="ENOG502SGKP">
    <property type="taxonomic scope" value="Eukaryota"/>
</dbReference>
<dbReference type="GeneTree" id="ENSGT00730000111514"/>
<dbReference type="HOGENOM" id="CLU_161471_0_0_1"/>
<dbReference type="InParanoid" id="Q148C3"/>
<dbReference type="OMA" id="LVKKDCA"/>
<dbReference type="OrthoDB" id="9449056at2759"/>
<dbReference type="TreeFam" id="TF336080"/>
<dbReference type="Reactome" id="R-BTA-163125">
    <property type="pathway name" value="Post-translational modification: synthesis of GPI-anchored proteins"/>
</dbReference>
<dbReference type="Proteomes" id="UP000009136">
    <property type="component" value="Chromosome 14"/>
</dbReference>
<dbReference type="Bgee" id="ENSBTAG00000034498">
    <property type="expression patterns" value="Expressed in surface of tongue and 50 other cell types or tissues"/>
</dbReference>
<dbReference type="GO" id="GO:0009986">
    <property type="term" value="C:cell surface"/>
    <property type="evidence" value="ECO:0000318"/>
    <property type="project" value="GO_Central"/>
</dbReference>
<dbReference type="GO" id="GO:0005886">
    <property type="term" value="C:plasma membrane"/>
    <property type="evidence" value="ECO:0007669"/>
    <property type="project" value="UniProtKB-SubCell"/>
</dbReference>
<dbReference type="GO" id="GO:0098552">
    <property type="term" value="C:side of membrane"/>
    <property type="evidence" value="ECO:0007669"/>
    <property type="project" value="UniProtKB-KW"/>
</dbReference>
<dbReference type="GO" id="GO:0030098">
    <property type="term" value="P:lymphocyte differentiation"/>
    <property type="evidence" value="ECO:0000318"/>
    <property type="project" value="GO_Central"/>
</dbReference>
<dbReference type="GO" id="GO:0035634">
    <property type="term" value="P:response to stilbenoid"/>
    <property type="evidence" value="ECO:0007669"/>
    <property type="project" value="Ensembl"/>
</dbReference>
<dbReference type="FunFam" id="2.10.60.10:FF:000003">
    <property type="entry name" value="lymphocyte antigen 6E isoform X1"/>
    <property type="match status" value="1"/>
</dbReference>
<dbReference type="Gene3D" id="2.10.60.10">
    <property type="entry name" value="CD59"/>
    <property type="match status" value="1"/>
</dbReference>
<dbReference type="InterPro" id="IPR018363">
    <property type="entry name" value="CD59_antigen_CS"/>
</dbReference>
<dbReference type="InterPro" id="IPR016054">
    <property type="entry name" value="LY6_UPA_recep-like"/>
</dbReference>
<dbReference type="InterPro" id="IPR042339">
    <property type="entry name" value="Ly6D"/>
</dbReference>
<dbReference type="InterPro" id="IPR045860">
    <property type="entry name" value="Snake_toxin-like_sf"/>
</dbReference>
<dbReference type="InterPro" id="IPR035076">
    <property type="entry name" value="Toxin/TOLIP"/>
</dbReference>
<dbReference type="PANTHER" id="PTHR16982">
    <property type="entry name" value="LYMPHOCYTE ANTIGEN 6D"/>
    <property type="match status" value="1"/>
</dbReference>
<dbReference type="PANTHER" id="PTHR16982:SF2">
    <property type="entry name" value="LYMPHOCYTE ANTIGEN 6D"/>
    <property type="match status" value="1"/>
</dbReference>
<dbReference type="Pfam" id="PF00087">
    <property type="entry name" value="Toxin_TOLIP"/>
    <property type="match status" value="1"/>
</dbReference>
<dbReference type="SMART" id="SM00134">
    <property type="entry name" value="LU"/>
    <property type="match status" value="1"/>
</dbReference>
<dbReference type="SUPFAM" id="SSF57302">
    <property type="entry name" value="Snake toxin-like"/>
    <property type="match status" value="1"/>
</dbReference>
<dbReference type="PROSITE" id="PS00983">
    <property type="entry name" value="LY6_UPAR"/>
    <property type="match status" value="1"/>
</dbReference>
<feature type="signal peptide" evidence="2">
    <location>
        <begin position="1"/>
        <end position="20"/>
    </location>
</feature>
<feature type="chain" id="PRO_0000318204" description="Lymphocyte antigen 6D">
    <location>
        <begin position="21"/>
        <end position="98"/>
    </location>
</feature>
<feature type="propeptide" id="PRO_0000318205" description="Removed in mature form" evidence="2">
    <location>
        <begin position="99"/>
        <end position="128"/>
    </location>
</feature>
<feature type="domain" description="UPAR/Ly6">
    <location>
        <begin position="21"/>
        <end position="108"/>
    </location>
</feature>
<feature type="lipid moiety-binding region" description="GPI-anchor amidated serine" evidence="2">
    <location>
        <position position="98"/>
    </location>
</feature>
<feature type="disulfide bond" evidence="1">
    <location>
        <begin position="23"/>
        <end position="45"/>
    </location>
</feature>
<feature type="disulfide bond" evidence="1">
    <location>
        <begin position="26"/>
        <end position="32"/>
    </location>
</feature>
<feature type="disulfide bond" evidence="1">
    <location>
        <begin position="38"/>
        <end position="63"/>
    </location>
</feature>
<feature type="disulfide bond" evidence="1">
    <location>
        <begin position="67"/>
        <end position="86"/>
    </location>
</feature>
<feature type="disulfide bond" evidence="1">
    <location>
        <begin position="87"/>
        <end position="92"/>
    </location>
</feature>
<protein>
    <recommendedName>
        <fullName>Lymphocyte antigen 6D</fullName>
        <shortName>Ly-6D</shortName>
    </recommendedName>
</protein>
<name>LY6D_BOVIN</name>
<proteinExistence type="evidence at transcript level"/>